<reference key="1">
    <citation type="journal article" date="2004" name="Science">
        <title>The genomic sequence of the accidental pathogen Legionella pneumophila.</title>
        <authorList>
            <person name="Chien M."/>
            <person name="Morozova I."/>
            <person name="Shi S."/>
            <person name="Sheng H."/>
            <person name="Chen J."/>
            <person name="Gomez S.M."/>
            <person name="Asamani G."/>
            <person name="Hill K."/>
            <person name="Nuara J."/>
            <person name="Feder M."/>
            <person name="Rineer J."/>
            <person name="Greenberg J.J."/>
            <person name="Steshenko V."/>
            <person name="Park S.H."/>
            <person name="Zhao B."/>
            <person name="Teplitskaya E."/>
            <person name="Edwards J.R."/>
            <person name="Pampou S."/>
            <person name="Georghiou A."/>
            <person name="Chou I.-C."/>
            <person name="Iannuccilli W."/>
            <person name="Ulz M.E."/>
            <person name="Kim D.H."/>
            <person name="Geringer-Sameth A."/>
            <person name="Goldsberry C."/>
            <person name="Morozov P."/>
            <person name="Fischer S.G."/>
            <person name="Segal G."/>
            <person name="Qu X."/>
            <person name="Rzhetsky A."/>
            <person name="Zhang P."/>
            <person name="Cayanis E."/>
            <person name="De Jong P.J."/>
            <person name="Ju J."/>
            <person name="Kalachikov S."/>
            <person name="Shuman H.A."/>
            <person name="Russo J.J."/>
        </authorList>
    </citation>
    <scope>NUCLEOTIDE SEQUENCE [LARGE SCALE GENOMIC DNA]</scope>
    <source>
        <strain>Philadelphia 1 / ATCC 33152 / DSM 7513</strain>
    </source>
</reference>
<proteinExistence type="inferred from homology"/>
<sequence>MQMVINEMKQKAIYPGTFDPVTNGHIDIITRASTIFPELIVAVASNKNKRPYLSWESRISLLEESVGHLTGVRVVGFDNLLIDFVLEQNAGIILRGLRAVSDFEYEFQLAGMNRKLSKKVETLFLTPAEHLMYISSTLVREIAALNGDISQFVPPNVVRELKKRQNERSL</sequence>
<keyword id="KW-0067">ATP-binding</keyword>
<keyword id="KW-0173">Coenzyme A biosynthesis</keyword>
<keyword id="KW-0963">Cytoplasm</keyword>
<keyword id="KW-0460">Magnesium</keyword>
<keyword id="KW-0547">Nucleotide-binding</keyword>
<keyword id="KW-0548">Nucleotidyltransferase</keyword>
<keyword id="KW-1185">Reference proteome</keyword>
<keyword id="KW-0808">Transferase</keyword>
<gene>
    <name evidence="1" type="primary">coaD</name>
    <name type="ordered locus">lpg0548</name>
</gene>
<accession>Q5ZY26</accession>
<evidence type="ECO:0000255" key="1">
    <source>
        <dbReference type="HAMAP-Rule" id="MF_00151"/>
    </source>
</evidence>
<evidence type="ECO:0000305" key="2"/>
<name>COAD_LEGPH</name>
<dbReference type="EC" id="2.7.7.3" evidence="1"/>
<dbReference type="EMBL" id="AE017354">
    <property type="protein sequence ID" value="AAU26643.1"/>
    <property type="status" value="ALT_INIT"/>
    <property type="molecule type" value="Genomic_DNA"/>
</dbReference>
<dbReference type="RefSeq" id="WP_011214781.1">
    <property type="nucleotide sequence ID" value="NC_002942.5"/>
</dbReference>
<dbReference type="RefSeq" id="YP_094590.1">
    <property type="nucleotide sequence ID" value="NC_002942.5"/>
</dbReference>
<dbReference type="SMR" id="Q5ZY26"/>
<dbReference type="STRING" id="272624.lpg0548"/>
<dbReference type="PaxDb" id="272624-lpg0548"/>
<dbReference type="GeneID" id="57034546"/>
<dbReference type="KEGG" id="lpn:lpg0548"/>
<dbReference type="PATRIC" id="fig|272624.6.peg.569"/>
<dbReference type="eggNOG" id="COG0669">
    <property type="taxonomic scope" value="Bacteria"/>
</dbReference>
<dbReference type="HOGENOM" id="CLU_100149_0_1_6"/>
<dbReference type="OrthoDB" id="9806661at2"/>
<dbReference type="UniPathway" id="UPA00241">
    <property type="reaction ID" value="UER00355"/>
</dbReference>
<dbReference type="Proteomes" id="UP000000609">
    <property type="component" value="Chromosome"/>
</dbReference>
<dbReference type="GO" id="GO:0005737">
    <property type="term" value="C:cytoplasm"/>
    <property type="evidence" value="ECO:0007669"/>
    <property type="project" value="UniProtKB-SubCell"/>
</dbReference>
<dbReference type="GO" id="GO:0005524">
    <property type="term" value="F:ATP binding"/>
    <property type="evidence" value="ECO:0007669"/>
    <property type="project" value="UniProtKB-KW"/>
</dbReference>
<dbReference type="GO" id="GO:0004595">
    <property type="term" value="F:pantetheine-phosphate adenylyltransferase activity"/>
    <property type="evidence" value="ECO:0007669"/>
    <property type="project" value="UniProtKB-UniRule"/>
</dbReference>
<dbReference type="GO" id="GO:0015937">
    <property type="term" value="P:coenzyme A biosynthetic process"/>
    <property type="evidence" value="ECO:0007669"/>
    <property type="project" value="UniProtKB-UniRule"/>
</dbReference>
<dbReference type="CDD" id="cd02163">
    <property type="entry name" value="PPAT"/>
    <property type="match status" value="1"/>
</dbReference>
<dbReference type="Gene3D" id="3.40.50.620">
    <property type="entry name" value="HUPs"/>
    <property type="match status" value="1"/>
</dbReference>
<dbReference type="HAMAP" id="MF_00151">
    <property type="entry name" value="PPAT_bact"/>
    <property type="match status" value="1"/>
</dbReference>
<dbReference type="InterPro" id="IPR004821">
    <property type="entry name" value="Cyt_trans-like"/>
</dbReference>
<dbReference type="InterPro" id="IPR001980">
    <property type="entry name" value="PPAT"/>
</dbReference>
<dbReference type="InterPro" id="IPR014729">
    <property type="entry name" value="Rossmann-like_a/b/a_fold"/>
</dbReference>
<dbReference type="NCBIfam" id="TIGR01510">
    <property type="entry name" value="coaD_prev_kdtB"/>
    <property type="match status" value="1"/>
</dbReference>
<dbReference type="NCBIfam" id="TIGR00125">
    <property type="entry name" value="cyt_tran_rel"/>
    <property type="match status" value="1"/>
</dbReference>
<dbReference type="PANTHER" id="PTHR21342">
    <property type="entry name" value="PHOSPHOPANTETHEINE ADENYLYLTRANSFERASE"/>
    <property type="match status" value="1"/>
</dbReference>
<dbReference type="PANTHER" id="PTHR21342:SF1">
    <property type="entry name" value="PHOSPHOPANTETHEINE ADENYLYLTRANSFERASE"/>
    <property type="match status" value="1"/>
</dbReference>
<dbReference type="Pfam" id="PF01467">
    <property type="entry name" value="CTP_transf_like"/>
    <property type="match status" value="1"/>
</dbReference>
<dbReference type="PRINTS" id="PR01020">
    <property type="entry name" value="LPSBIOSNTHSS"/>
</dbReference>
<dbReference type="SUPFAM" id="SSF52374">
    <property type="entry name" value="Nucleotidylyl transferase"/>
    <property type="match status" value="1"/>
</dbReference>
<organism>
    <name type="scientific">Legionella pneumophila subsp. pneumophila (strain Philadelphia 1 / ATCC 33152 / DSM 7513)</name>
    <dbReference type="NCBI Taxonomy" id="272624"/>
    <lineage>
        <taxon>Bacteria</taxon>
        <taxon>Pseudomonadati</taxon>
        <taxon>Pseudomonadota</taxon>
        <taxon>Gammaproteobacteria</taxon>
        <taxon>Legionellales</taxon>
        <taxon>Legionellaceae</taxon>
        <taxon>Legionella</taxon>
    </lineage>
</organism>
<feature type="chain" id="PRO_0000156225" description="Phosphopantetheine adenylyltransferase">
    <location>
        <begin position="1"/>
        <end position="170"/>
    </location>
</feature>
<feature type="binding site" evidence="1">
    <location>
        <begin position="17"/>
        <end position="18"/>
    </location>
    <ligand>
        <name>ATP</name>
        <dbReference type="ChEBI" id="CHEBI:30616"/>
    </ligand>
</feature>
<feature type="binding site" evidence="1">
    <location>
        <position position="17"/>
    </location>
    <ligand>
        <name>substrate</name>
    </ligand>
</feature>
<feature type="binding site" evidence="1">
    <location>
        <position position="25"/>
    </location>
    <ligand>
        <name>ATP</name>
        <dbReference type="ChEBI" id="CHEBI:30616"/>
    </ligand>
</feature>
<feature type="binding site" evidence="1">
    <location>
        <position position="49"/>
    </location>
    <ligand>
        <name>substrate</name>
    </ligand>
</feature>
<feature type="binding site" evidence="1">
    <location>
        <position position="81"/>
    </location>
    <ligand>
        <name>substrate</name>
    </ligand>
</feature>
<feature type="binding site" evidence="1">
    <location>
        <position position="95"/>
    </location>
    <ligand>
        <name>substrate</name>
    </ligand>
</feature>
<feature type="binding site" evidence="1">
    <location>
        <begin position="96"/>
        <end position="98"/>
    </location>
    <ligand>
        <name>ATP</name>
        <dbReference type="ChEBI" id="CHEBI:30616"/>
    </ligand>
</feature>
<feature type="binding site" evidence="1">
    <location>
        <position position="106"/>
    </location>
    <ligand>
        <name>ATP</name>
        <dbReference type="ChEBI" id="CHEBI:30616"/>
    </ligand>
</feature>
<feature type="binding site" evidence="1">
    <location>
        <begin position="131"/>
        <end position="137"/>
    </location>
    <ligand>
        <name>ATP</name>
        <dbReference type="ChEBI" id="CHEBI:30616"/>
    </ligand>
</feature>
<feature type="site" description="Transition state stabilizer" evidence="1">
    <location>
        <position position="25"/>
    </location>
</feature>
<protein>
    <recommendedName>
        <fullName evidence="1">Phosphopantetheine adenylyltransferase</fullName>
        <ecNumber evidence="1">2.7.7.3</ecNumber>
    </recommendedName>
    <alternativeName>
        <fullName evidence="1">Dephospho-CoA pyrophosphorylase</fullName>
    </alternativeName>
    <alternativeName>
        <fullName evidence="1">Pantetheine-phosphate adenylyltransferase</fullName>
        <shortName evidence="1">PPAT</shortName>
    </alternativeName>
</protein>
<comment type="function">
    <text evidence="1">Reversibly transfers an adenylyl group from ATP to 4'-phosphopantetheine, yielding dephospho-CoA (dPCoA) and pyrophosphate.</text>
</comment>
<comment type="catalytic activity">
    <reaction evidence="1">
        <text>(R)-4'-phosphopantetheine + ATP + H(+) = 3'-dephospho-CoA + diphosphate</text>
        <dbReference type="Rhea" id="RHEA:19801"/>
        <dbReference type="ChEBI" id="CHEBI:15378"/>
        <dbReference type="ChEBI" id="CHEBI:30616"/>
        <dbReference type="ChEBI" id="CHEBI:33019"/>
        <dbReference type="ChEBI" id="CHEBI:57328"/>
        <dbReference type="ChEBI" id="CHEBI:61723"/>
        <dbReference type="EC" id="2.7.7.3"/>
    </reaction>
</comment>
<comment type="cofactor">
    <cofactor evidence="1">
        <name>Mg(2+)</name>
        <dbReference type="ChEBI" id="CHEBI:18420"/>
    </cofactor>
</comment>
<comment type="pathway">
    <text evidence="1">Cofactor biosynthesis; coenzyme A biosynthesis; CoA from (R)-pantothenate: step 4/5.</text>
</comment>
<comment type="subunit">
    <text evidence="1">Homohexamer.</text>
</comment>
<comment type="subcellular location">
    <subcellularLocation>
        <location evidence="1">Cytoplasm</location>
    </subcellularLocation>
</comment>
<comment type="similarity">
    <text evidence="1">Belongs to the bacterial CoaD family.</text>
</comment>
<comment type="sequence caution" evidence="2">
    <conflict type="erroneous initiation">
        <sequence resource="EMBL-CDS" id="AAU26643"/>
    </conflict>
</comment>